<name>NOL9_MOUSE</name>
<keyword id="KW-0007">Acetylation</keyword>
<keyword id="KW-0025">Alternative splicing</keyword>
<keyword id="KW-0067">ATP-binding</keyword>
<keyword id="KW-1017">Isopeptide bond</keyword>
<keyword id="KW-0418">Kinase</keyword>
<keyword id="KW-0547">Nucleotide-binding</keyword>
<keyword id="KW-0539">Nucleus</keyword>
<keyword id="KW-0597">Phosphoprotein</keyword>
<keyword id="KW-1185">Reference proteome</keyword>
<keyword id="KW-0694">RNA-binding</keyword>
<keyword id="KW-0698">rRNA processing</keyword>
<keyword id="KW-0808">Transferase</keyword>
<keyword id="KW-0832">Ubl conjugation</keyword>
<gene>
    <name evidence="18" type="primary">Nol9</name>
</gene>
<sequence>MAESEVLHRRAPSRSSWLRVRKARPHLLLSRRGRRRFGVLTRVELRRLRRRLLRAHALGGDWKQVAPAGAHVAVKCKLRARSRPAPRSPPTPSVPPAPCTASATCSLLNPRNHSTPQSRAGRPVRKVSPNVTQPVRDLGSGRVLMMLPPGEGFTFSGICRVTCVYGQLEVYGHIINQGQPPQDVFSVYTHSYLTINGVPYAEPEKSEKAIRREIRALLKPYTKLDDRNWVVRYFPPLGSIMILERMQSRFVDFLKTYKCSSYVLLQENAPVRVNSEFTTLKKIGIRRQKRKKAICLSESGLCALEELVSVSCDGCPVILLCGACDIGKSTFNRILINQLLNSIPGVDYLECDLGQTEFTPPGCVALLTITEPLLGPPYTHQRKPQRMVYYGKMNCYNDYENYIDIVKYVFRDYKREFPLIINTMGWVSDNGLRLLVDLIRVLSPNYVVQLYSDRCKFTPTLTSEYVELTDGLYTKSKIKRYRGFEIPEFGDNLEFTYEEKESSPLPVFTGHVLLSVHSEFLSSKNEKNRAKYNRIFRDLAVLGYLSQLMLPVPESLSPLHSLTPYQVPFSAVAIRVLHADVAPTHILYAVNASWVGLCRIVDDMKGYTRGPILLAQNPICDCLGFGICRGIDMDKRTYHILTPLPPEELKTVNCLLVGSISIPHCIFQNQPGPEGSVPYVTTDYNLNIPGATEKIGEREYGKAFPRHKLRQRRK</sequence>
<proteinExistence type="evidence at protein level"/>
<dbReference type="EC" id="2.7.1.78" evidence="1"/>
<dbReference type="EMBL" id="AK014568">
    <property type="protein sequence ID" value="BAB29433.1"/>
    <property type="molecule type" value="mRNA"/>
</dbReference>
<dbReference type="EMBL" id="AK042581">
    <property type="protein sequence ID" value="BAC31300.1"/>
    <property type="molecule type" value="mRNA"/>
</dbReference>
<dbReference type="EMBL" id="AK046761">
    <property type="protein sequence ID" value="BAC32857.1"/>
    <property type="molecule type" value="mRNA"/>
</dbReference>
<dbReference type="EMBL" id="AK050948">
    <property type="protein sequence ID" value="BAC34472.1"/>
    <property type="molecule type" value="mRNA"/>
</dbReference>
<dbReference type="EMBL" id="AK157398">
    <property type="protein sequence ID" value="BAE34079.1"/>
    <property type="molecule type" value="mRNA"/>
</dbReference>
<dbReference type="EMBL" id="AL611927">
    <property type="protein sequence ID" value="CAM24579.1"/>
    <property type="molecule type" value="Genomic_DNA"/>
</dbReference>
<dbReference type="EMBL" id="AL611927">
    <property type="protein sequence ID" value="CAM24580.1"/>
    <property type="molecule type" value="Genomic_DNA"/>
</dbReference>
<dbReference type="EMBL" id="CH466594">
    <property type="protein sequence ID" value="EDL14922.1"/>
    <property type="molecule type" value="Genomic_DNA"/>
</dbReference>
<dbReference type="EMBL" id="BC024877">
    <property type="protein sequence ID" value="AAH24877.1"/>
    <property type="status" value="ALT_SEQ"/>
    <property type="molecule type" value="mRNA"/>
</dbReference>
<dbReference type="EMBL" id="BC125432">
    <property type="protein sequence ID" value="AAI25433.1"/>
    <property type="molecule type" value="mRNA"/>
</dbReference>
<dbReference type="EMBL" id="BC132099">
    <property type="protein sequence ID" value="AAI32100.1"/>
    <property type="molecule type" value="mRNA"/>
</dbReference>
<dbReference type="CCDS" id="CCDS18986.1">
    <molecule id="Q3TZX8-2"/>
</dbReference>
<dbReference type="CCDS" id="CCDS51389.1">
    <molecule id="Q3TZX8-1"/>
</dbReference>
<dbReference type="RefSeq" id="NP_001153071.1">
    <molecule id="Q3TZX8-1"/>
    <property type="nucleotide sequence ID" value="NM_001159599.2"/>
</dbReference>
<dbReference type="RefSeq" id="NP_083003.2">
    <molecule id="Q3TZX8-2"/>
    <property type="nucleotide sequence ID" value="NM_028727.3"/>
</dbReference>
<dbReference type="SMR" id="Q3TZX8"/>
<dbReference type="BioGRID" id="216440">
    <property type="interactions" value="8"/>
</dbReference>
<dbReference type="FunCoup" id="Q3TZX8">
    <property type="interactions" value="4120"/>
</dbReference>
<dbReference type="IntAct" id="Q3TZX8">
    <property type="interactions" value="2"/>
</dbReference>
<dbReference type="STRING" id="10090.ENSMUSP00000081133"/>
<dbReference type="GlyGen" id="Q3TZX8">
    <property type="glycosylation" value="2 sites, 1 O-linked glycan (1 site)"/>
</dbReference>
<dbReference type="iPTMnet" id="Q3TZX8"/>
<dbReference type="PhosphoSitePlus" id="Q3TZX8"/>
<dbReference type="jPOST" id="Q3TZX8"/>
<dbReference type="PaxDb" id="10090-ENSMUSP00000099486"/>
<dbReference type="PeptideAtlas" id="Q3TZX8"/>
<dbReference type="ProteomicsDB" id="252919">
    <molecule id="Q3TZX8-1"/>
</dbReference>
<dbReference type="ProteomicsDB" id="252920">
    <molecule id="Q3TZX8-2"/>
</dbReference>
<dbReference type="ProteomicsDB" id="252921">
    <molecule id="Q3TZX8-3"/>
</dbReference>
<dbReference type="Pumba" id="Q3TZX8"/>
<dbReference type="Antibodypedia" id="53093">
    <property type="antibodies" value="52 antibodies from 24 providers"/>
</dbReference>
<dbReference type="DNASU" id="74035"/>
<dbReference type="Ensembl" id="ENSMUST00000084116.13">
    <molecule id="Q3TZX8-1"/>
    <property type="protein sequence ID" value="ENSMUSP00000081133.7"/>
    <property type="gene ID" value="ENSMUSG00000028948.17"/>
</dbReference>
<dbReference type="Ensembl" id="ENSMUST00000103197.5">
    <molecule id="Q3TZX8-2"/>
    <property type="protein sequence ID" value="ENSMUSP00000099486.4"/>
    <property type="gene ID" value="ENSMUSG00000028948.17"/>
</dbReference>
<dbReference type="GeneID" id="74035"/>
<dbReference type="KEGG" id="mmu:74035"/>
<dbReference type="UCSC" id="uc008vzc.3">
    <molecule id="Q3TZX8-3"/>
    <property type="organism name" value="mouse"/>
</dbReference>
<dbReference type="UCSC" id="uc008vzd.3">
    <molecule id="Q3TZX8-1"/>
    <property type="organism name" value="mouse"/>
</dbReference>
<dbReference type="UCSC" id="uc008vzf.3">
    <molecule id="Q3TZX8-2"/>
    <property type="organism name" value="mouse"/>
</dbReference>
<dbReference type="AGR" id="MGI:1921285"/>
<dbReference type="CTD" id="79707"/>
<dbReference type="MGI" id="MGI:1921285">
    <property type="gene designation" value="Nol9"/>
</dbReference>
<dbReference type="VEuPathDB" id="HostDB:ENSMUSG00000028948"/>
<dbReference type="eggNOG" id="KOG2750">
    <property type="taxonomic scope" value="Eukaryota"/>
</dbReference>
<dbReference type="GeneTree" id="ENSGT00940000153668"/>
<dbReference type="HOGENOM" id="CLU_021128_2_0_1"/>
<dbReference type="InParanoid" id="Q3TZX8"/>
<dbReference type="OMA" id="YFGETSC"/>
<dbReference type="OrthoDB" id="2405412at2759"/>
<dbReference type="PhylomeDB" id="Q3TZX8"/>
<dbReference type="TreeFam" id="TF313802"/>
<dbReference type="Reactome" id="R-MMU-6791226">
    <property type="pathway name" value="Major pathway of rRNA processing in the nucleolus and cytosol"/>
</dbReference>
<dbReference type="BioGRID-ORCS" id="74035">
    <property type="hits" value="25 hits in 63 CRISPR screens"/>
</dbReference>
<dbReference type="ChiTaRS" id="Nol9">
    <property type="organism name" value="mouse"/>
</dbReference>
<dbReference type="PRO" id="PR:Q3TZX8"/>
<dbReference type="Proteomes" id="UP000000589">
    <property type="component" value="Chromosome 4"/>
</dbReference>
<dbReference type="RNAct" id="Q3TZX8">
    <property type="molecule type" value="protein"/>
</dbReference>
<dbReference type="Bgee" id="ENSMUSG00000028948">
    <property type="expression patterns" value="Expressed in cleaving embryo and 218 other cell types or tissues"/>
</dbReference>
<dbReference type="ExpressionAtlas" id="Q3TZX8">
    <property type="expression patterns" value="baseline and differential"/>
</dbReference>
<dbReference type="GO" id="GO:0045111">
    <property type="term" value="C:intermediate filament cytoskeleton"/>
    <property type="evidence" value="ECO:0007669"/>
    <property type="project" value="Ensembl"/>
</dbReference>
<dbReference type="GO" id="GO:0005730">
    <property type="term" value="C:nucleolus"/>
    <property type="evidence" value="ECO:0000250"/>
    <property type="project" value="UniProtKB"/>
</dbReference>
<dbReference type="GO" id="GO:0005524">
    <property type="term" value="F:ATP binding"/>
    <property type="evidence" value="ECO:0007669"/>
    <property type="project" value="UniProtKB-KW"/>
</dbReference>
<dbReference type="GO" id="GO:0046404">
    <property type="term" value="F:ATP-dependent polydeoxyribonucleotide 5'-hydroxyl-kinase activity"/>
    <property type="evidence" value="ECO:0000250"/>
    <property type="project" value="UniProtKB"/>
</dbReference>
<dbReference type="GO" id="GO:0051736">
    <property type="term" value="F:ATP-dependent polyribonucleotide 5'-hydroxyl-kinase activity"/>
    <property type="evidence" value="ECO:0007669"/>
    <property type="project" value="RHEA"/>
</dbReference>
<dbReference type="GO" id="GO:0003723">
    <property type="term" value="F:RNA binding"/>
    <property type="evidence" value="ECO:0007669"/>
    <property type="project" value="UniProtKB-KW"/>
</dbReference>
<dbReference type="GO" id="GO:0000460">
    <property type="term" value="P:maturation of 5.8S rRNA"/>
    <property type="evidence" value="ECO:0000250"/>
    <property type="project" value="UniProtKB"/>
</dbReference>
<dbReference type="FunFam" id="3.40.50.300:FF:001243">
    <property type="entry name" value="Nucleolar protein 9"/>
    <property type="match status" value="1"/>
</dbReference>
<dbReference type="Gene3D" id="3.40.50.300">
    <property type="entry name" value="P-loop containing nucleotide triphosphate hydrolases"/>
    <property type="match status" value="1"/>
</dbReference>
<dbReference type="InterPro" id="IPR045116">
    <property type="entry name" value="Clp1/Grc3"/>
</dbReference>
<dbReference type="InterPro" id="IPR032319">
    <property type="entry name" value="CLP1_P"/>
</dbReference>
<dbReference type="InterPro" id="IPR027417">
    <property type="entry name" value="P-loop_NTPase"/>
</dbReference>
<dbReference type="PANTHER" id="PTHR12755">
    <property type="entry name" value="CLEAVAGE/POLYADENYLATION FACTOR IA SUBUNIT CLP1P"/>
    <property type="match status" value="1"/>
</dbReference>
<dbReference type="PANTHER" id="PTHR12755:SF3">
    <property type="entry name" value="POLYNUCLEOTIDE 5'-HYDROXYL-KINASE NOL9"/>
    <property type="match status" value="1"/>
</dbReference>
<dbReference type="Pfam" id="PF16575">
    <property type="entry name" value="CLP1_P"/>
    <property type="match status" value="1"/>
</dbReference>
<dbReference type="Pfam" id="PF24419">
    <property type="entry name" value="Cupin_NOL9"/>
    <property type="match status" value="1"/>
</dbReference>
<dbReference type="Pfam" id="PF25467">
    <property type="entry name" value="NOL9_C"/>
    <property type="match status" value="1"/>
</dbReference>
<reference evidence="9 16" key="1">
    <citation type="journal article" date="2005" name="Science">
        <title>The transcriptional landscape of the mammalian genome.</title>
        <authorList>
            <person name="Carninci P."/>
            <person name="Kasukawa T."/>
            <person name="Katayama S."/>
            <person name="Gough J."/>
            <person name="Frith M.C."/>
            <person name="Maeda N."/>
            <person name="Oyama R."/>
            <person name="Ravasi T."/>
            <person name="Lenhard B."/>
            <person name="Wells C."/>
            <person name="Kodzius R."/>
            <person name="Shimokawa K."/>
            <person name="Bajic V.B."/>
            <person name="Brenner S.E."/>
            <person name="Batalov S."/>
            <person name="Forrest A.R."/>
            <person name="Zavolan M."/>
            <person name="Davis M.J."/>
            <person name="Wilming L.G."/>
            <person name="Aidinis V."/>
            <person name="Allen J.E."/>
            <person name="Ambesi-Impiombato A."/>
            <person name="Apweiler R."/>
            <person name="Aturaliya R.N."/>
            <person name="Bailey T.L."/>
            <person name="Bansal M."/>
            <person name="Baxter L."/>
            <person name="Beisel K.W."/>
            <person name="Bersano T."/>
            <person name="Bono H."/>
            <person name="Chalk A.M."/>
            <person name="Chiu K.P."/>
            <person name="Choudhary V."/>
            <person name="Christoffels A."/>
            <person name="Clutterbuck D.R."/>
            <person name="Crowe M.L."/>
            <person name="Dalla E."/>
            <person name="Dalrymple B.P."/>
            <person name="de Bono B."/>
            <person name="Della Gatta G."/>
            <person name="di Bernardo D."/>
            <person name="Down T."/>
            <person name="Engstrom P."/>
            <person name="Fagiolini M."/>
            <person name="Faulkner G."/>
            <person name="Fletcher C.F."/>
            <person name="Fukushima T."/>
            <person name="Furuno M."/>
            <person name="Futaki S."/>
            <person name="Gariboldi M."/>
            <person name="Georgii-Hemming P."/>
            <person name="Gingeras T.R."/>
            <person name="Gojobori T."/>
            <person name="Green R.E."/>
            <person name="Gustincich S."/>
            <person name="Harbers M."/>
            <person name="Hayashi Y."/>
            <person name="Hensch T.K."/>
            <person name="Hirokawa N."/>
            <person name="Hill D."/>
            <person name="Huminiecki L."/>
            <person name="Iacono M."/>
            <person name="Ikeo K."/>
            <person name="Iwama A."/>
            <person name="Ishikawa T."/>
            <person name="Jakt M."/>
            <person name="Kanapin A."/>
            <person name="Katoh M."/>
            <person name="Kawasawa Y."/>
            <person name="Kelso J."/>
            <person name="Kitamura H."/>
            <person name="Kitano H."/>
            <person name="Kollias G."/>
            <person name="Krishnan S.P."/>
            <person name="Kruger A."/>
            <person name="Kummerfeld S.K."/>
            <person name="Kurochkin I.V."/>
            <person name="Lareau L.F."/>
            <person name="Lazarevic D."/>
            <person name="Lipovich L."/>
            <person name="Liu J."/>
            <person name="Liuni S."/>
            <person name="McWilliam S."/>
            <person name="Madan Babu M."/>
            <person name="Madera M."/>
            <person name="Marchionni L."/>
            <person name="Matsuda H."/>
            <person name="Matsuzawa S."/>
            <person name="Miki H."/>
            <person name="Mignone F."/>
            <person name="Miyake S."/>
            <person name="Morris K."/>
            <person name="Mottagui-Tabar S."/>
            <person name="Mulder N."/>
            <person name="Nakano N."/>
            <person name="Nakauchi H."/>
            <person name="Ng P."/>
            <person name="Nilsson R."/>
            <person name="Nishiguchi S."/>
            <person name="Nishikawa S."/>
            <person name="Nori F."/>
            <person name="Ohara O."/>
            <person name="Okazaki Y."/>
            <person name="Orlando V."/>
            <person name="Pang K.C."/>
            <person name="Pavan W.J."/>
            <person name="Pavesi G."/>
            <person name="Pesole G."/>
            <person name="Petrovsky N."/>
            <person name="Piazza S."/>
            <person name="Reed J."/>
            <person name="Reid J.F."/>
            <person name="Ring B.Z."/>
            <person name="Ringwald M."/>
            <person name="Rost B."/>
            <person name="Ruan Y."/>
            <person name="Salzberg S.L."/>
            <person name="Sandelin A."/>
            <person name="Schneider C."/>
            <person name="Schoenbach C."/>
            <person name="Sekiguchi K."/>
            <person name="Semple C.A."/>
            <person name="Seno S."/>
            <person name="Sessa L."/>
            <person name="Sheng Y."/>
            <person name="Shibata Y."/>
            <person name="Shimada H."/>
            <person name="Shimada K."/>
            <person name="Silva D."/>
            <person name="Sinclair B."/>
            <person name="Sperling S."/>
            <person name="Stupka E."/>
            <person name="Sugiura K."/>
            <person name="Sultana R."/>
            <person name="Takenaka Y."/>
            <person name="Taki K."/>
            <person name="Tammoja K."/>
            <person name="Tan S.L."/>
            <person name="Tang S."/>
            <person name="Taylor M.S."/>
            <person name="Tegner J."/>
            <person name="Teichmann S.A."/>
            <person name="Ueda H.R."/>
            <person name="van Nimwegen E."/>
            <person name="Verardo R."/>
            <person name="Wei C.L."/>
            <person name="Yagi K."/>
            <person name="Yamanishi H."/>
            <person name="Zabarovsky E."/>
            <person name="Zhu S."/>
            <person name="Zimmer A."/>
            <person name="Hide W."/>
            <person name="Bult C."/>
            <person name="Grimmond S.M."/>
            <person name="Teasdale R.D."/>
            <person name="Liu E.T."/>
            <person name="Brusic V."/>
            <person name="Quackenbush J."/>
            <person name="Wahlestedt C."/>
            <person name="Mattick J.S."/>
            <person name="Hume D.A."/>
            <person name="Kai C."/>
            <person name="Sasaki D."/>
            <person name="Tomaru Y."/>
            <person name="Fukuda S."/>
            <person name="Kanamori-Katayama M."/>
            <person name="Suzuki M."/>
            <person name="Aoki J."/>
            <person name="Arakawa T."/>
            <person name="Iida J."/>
            <person name="Imamura K."/>
            <person name="Itoh M."/>
            <person name="Kato T."/>
            <person name="Kawaji H."/>
            <person name="Kawagashira N."/>
            <person name="Kawashima T."/>
            <person name="Kojima M."/>
            <person name="Kondo S."/>
            <person name="Konno H."/>
            <person name="Nakano K."/>
            <person name="Ninomiya N."/>
            <person name="Nishio T."/>
            <person name="Okada M."/>
            <person name="Plessy C."/>
            <person name="Shibata K."/>
            <person name="Shiraki T."/>
            <person name="Suzuki S."/>
            <person name="Tagami M."/>
            <person name="Waki K."/>
            <person name="Watahiki A."/>
            <person name="Okamura-Oho Y."/>
            <person name="Suzuki H."/>
            <person name="Kawai J."/>
            <person name="Hayashizaki Y."/>
        </authorList>
    </citation>
    <scope>NUCLEOTIDE SEQUENCE [LARGE SCALE MRNA] (ISOFORMS 1; 2 AND 3)</scope>
    <source>
        <strain evidence="12">C57BL/6J</strain>
        <strain evidence="16">NOD</strain>
        <tissue evidence="13">Cerebellum</tissue>
        <tissue evidence="15">Embryo</tissue>
        <tissue evidence="12">Neonatal skin</tissue>
        <tissue evidence="16">Spleen</tissue>
        <tissue evidence="14">Thymus</tissue>
    </source>
</reference>
<reference key="2">
    <citation type="journal article" date="2009" name="PLoS Biol.">
        <title>Lineage-specific biology revealed by a finished genome assembly of the mouse.</title>
        <authorList>
            <person name="Church D.M."/>
            <person name="Goodstadt L."/>
            <person name="Hillier L.W."/>
            <person name="Zody M.C."/>
            <person name="Goldstein S."/>
            <person name="She X."/>
            <person name="Bult C.J."/>
            <person name="Agarwala R."/>
            <person name="Cherry J.L."/>
            <person name="DiCuccio M."/>
            <person name="Hlavina W."/>
            <person name="Kapustin Y."/>
            <person name="Meric P."/>
            <person name="Maglott D."/>
            <person name="Birtle Z."/>
            <person name="Marques A.C."/>
            <person name="Graves T."/>
            <person name="Zhou S."/>
            <person name="Teague B."/>
            <person name="Potamousis K."/>
            <person name="Churas C."/>
            <person name="Place M."/>
            <person name="Herschleb J."/>
            <person name="Runnheim R."/>
            <person name="Forrest D."/>
            <person name="Amos-Landgraf J."/>
            <person name="Schwartz D.C."/>
            <person name="Cheng Z."/>
            <person name="Lindblad-Toh K."/>
            <person name="Eichler E.E."/>
            <person name="Ponting C.P."/>
        </authorList>
    </citation>
    <scope>NUCLEOTIDE SEQUENCE [LARGE SCALE GENOMIC DNA]</scope>
    <source>
        <strain>C57BL/6J</strain>
    </source>
</reference>
<reference evidence="17" key="3">
    <citation type="submission" date="2005-07" db="EMBL/GenBank/DDBJ databases">
        <authorList>
            <person name="Mural R.J."/>
            <person name="Adams M.D."/>
            <person name="Myers E.W."/>
            <person name="Smith H.O."/>
            <person name="Venter J.C."/>
        </authorList>
    </citation>
    <scope>NUCLEOTIDE SEQUENCE [LARGE SCALE GENOMIC DNA]</scope>
</reference>
<reference evidence="9 11" key="4">
    <citation type="journal article" date="2004" name="Genome Res.">
        <title>The status, quality, and expansion of the NIH full-length cDNA project: the Mammalian Gene Collection (MGC).</title>
        <authorList>
            <consortium name="The MGC Project Team"/>
        </authorList>
    </citation>
    <scope>NUCLEOTIDE SEQUENCE [LARGE SCALE MRNA] (ISOFORM 2)</scope>
    <scope>NUCLEOTIDE SEQUENCE [LARGE SCALE MRNA] OF 1-524 (ISOFORMS 1/2/3)</scope>
    <source>
        <strain evidence="10">FVB/N</strain>
        <tissue evidence="10">Mammary tumor</tissue>
    </source>
</reference>
<reference key="5">
    <citation type="journal article" date="2010" name="Cell">
        <title>A tissue-specific atlas of mouse protein phosphorylation and expression.</title>
        <authorList>
            <person name="Huttlin E.L."/>
            <person name="Jedrychowski M.P."/>
            <person name="Elias J.E."/>
            <person name="Goswami T."/>
            <person name="Rad R."/>
            <person name="Beausoleil S.A."/>
            <person name="Villen J."/>
            <person name="Haas W."/>
            <person name="Sowa M.E."/>
            <person name="Gygi S.P."/>
        </authorList>
    </citation>
    <scope>PHOSPHORYLATION [LARGE SCALE ANALYSIS] AT SER-128</scope>
    <scope>IDENTIFICATION BY MASS SPECTROMETRY [LARGE SCALE ANALYSIS]</scope>
    <source>
        <tissue>Kidney</tissue>
        <tissue>Spleen</tissue>
        <tissue>Testis</tissue>
    </source>
</reference>
<reference key="6">
    <citation type="journal article" date="2012" name="Mol. Cell. Proteomics">
        <title>Five friends of methylated chromatin target of protein-arginine-methyltransferase[prmt]-1 (chtop), a complex linking arginine methylation to desumoylation.</title>
        <authorList>
            <person name="Fanis P."/>
            <person name="Gillemans N."/>
            <person name="Aghajanirefah A."/>
            <person name="Pourfarzad F."/>
            <person name="Demmers J."/>
            <person name="Esteghamat F."/>
            <person name="Vadlamudi R.K."/>
            <person name="Grosveld F."/>
            <person name="Philipsen S."/>
            <person name="van Dijk T.B."/>
        </authorList>
    </citation>
    <scope>INTERACTION WITH PELP1; WDR18 AND SENP3</scope>
    <scope>SUBCELLULAR LOCATION</scope>
</reference>
<evidence type="ECO:0000250" key="1">
    <source>
        <dbReference type="UniProtKB" id="Q5SY16"/>
    </source>
</evidence>
<evidence type="ECO:0000255" key="2"/>
<evidence type="ECO:0000256" key="3">
    <source>
        <dbReference type="SAM" id="MobiDB-lite"/>
    </source>
</evidence>
<evidence type="ECO:0000269" key="4">
    <source>
    </source>
</evidence>
<evidence type="ECO:0000269" key="5">
    <source>
    </source>
</evidence>
<evidence type="ECO:0000269" key="6">
    <source>
    </source>
</evidence>
<evidence type="ECO:0000303" key="7">
    <source>
    </source>
</evidence>
<evidence type="ECO:0000303" key="8">
    <source>
    </source>
</evidence>
<evidence type="ECO:0000305" key="9"/>
<evidence type="ECO:0000312" key="10">
    <source>
        <dbReference type="EMBL" id="AAH24877.1"/>
    </source>
</evidence>
<evidence type="ECO:0000312" key="11">
    <source>
        <dbReference type="EMBL" id="AAI25433.1"/>
    </source>
</evidence>
<evidence type="ECO:0000312" key="12">
    <source>
        <dbReference type="EMBL" id="BAB29433.1"/>
    </source>
</evidence>
<evidence type="ECO:0000312" key="13">
    <source>
        <dbReference type="EMBL" id="BAC31300.1"/>
    </source>
</evidence>
<evidence type="ECO:0000312" key="14">
    <source>
        <dbReference type="EMBL" id="BAC32857.1"/>
    </source>
</evidence>
<evidence type="ECO:0000312" key="15">
    <source>
        <dbReference type="EMBL" id="BAC34472.1"/>
    </source>
</evidence>
<evidence type="ECO:0000312" key="16">
    <source>
        <dbReference type="EMBL" id="BAE34079.1"/>
    </source>
</evidence>
<evidence type="ECO:0000312" key="17">
    <source>
        <dbReference type="EMBL" id="CAM24580.1"/>
    </source>
</evidence>
<evidence type="ECO:0000312" key="18">
    <source>
        <dbReference type="MGI" id="MGI:1921285"/>
    </source>
</evidence>
<evidence type="ECO:0007744" key="19">
    <source>
    </source>
</evidence>
<accession>Q3TZX8</accession>
<accession>A0PJC7</accession>
<accession>B1AS65</accession>
<accession>Q05A31</accession>
<accession>Q8BQE1</accession>
<accession>Q8C8L5</accession>
<accession>Q8C9A8</accession>
<accession>Q9D678</accession>
<protein>
    <recommendedName>
        <fullName>Polynucleotide 5'-hydroxyl-kinase NOL9</fullName>
        <ecNumber evidence="1">2.7.1.78</ecNumber>
    </recommendedName>
    <alternativeName>
        <fullName evidence="11">Nucleolar protein 9</fullName>
    </alternativeName>
</protein>
<comment type="function">
    <text evidence="1">Polynucleotide kinase that can phosphorylate the 5'-hydroxyl groups of single-stranded and double-stranded RNA and DNA substrates (By similarity). Involved in rRNA processing and its kinase activity is required for the processing of the 32S precursor into 5.8S and 28S rRNAs, more specifically for the generation of the major 5.8S(S) form. Required for the efficient pre-rRNA processing of internal transcribed spacer 2 (ITS2). Associates with LAS1L to form an ITS2 pre-rRNA endonuclease-kinase complex and is responsible for the transport of this complex into the nucleolus (By similarity).</text>
</comment>
<comment type="catalytic activity">
    <reaction evidence="1">
        <text>a 5'-end dephospho-2'-deoxyribonucleoside-DNA + ATP = a 5'-end 5'-phospho-2'-deoxyribonucleoside-DNA + ADP + H(+)</text>
        <dbReference type="Rhea" id="RHEA:15669"/>
        <dbReference type="Rhea" id="RHEA-COMP:13180"/>
        <dbReference type="Rhea" id="RHEA-COMP:13184"/>
        <dbReference type="ChEBI" id="CHEBI:15378"/>
        <dbReference type="ChEBI" id="CHEBI:30616"/>
        <dbReference type="ChEBI" id="CHEBI:136412"/>
        <dbReference type="ChEBI" id="CHEBI:136416"/>
        <dbReference type="ChEBI" id="CHEBI:456216"/>
        <dbReference type="EC" id="2.7.1.78"/>
    </reaction>
</comment>
<comment type="catalytic activity">
    <reaction evidence="1">
        <text>a 5'-end dephospho-ribonucleoside-RNA + ATP = a 5'-end 5'-phospho-ribonucleoside-RNA + ADP + H(+)</text>
        <dbReference type="Rhea" id="RHEA:54580"/>
        <dbReference type="Rhea" id="RHEA-COMP:13936"/>
        <dbReference type="Rhea" id="RHEA-COMP:15179"/>
        <dbReference type="ChEBI" id="CHEBI:15378"/>
        <dbReference type="ChEBI" id="CHEBI:30616"/>
        <dbReference type="ChEBI" id="CHEBI:138282"/>
        <dbReference type="ChEBI" id="CHEBI:138284"/>
        <dbReference type="ChEBI" id="CHEBI:456216"/>
        <dbReference type="EC" id="2.7.1.78"/>
    </reaction>
</comment>
<comment type="subunit">
    <text evidence="1 6">Interacts with PELP1, WDR18 and SENP3 (PubMed:22872859). Interacts with LAS1L to form an ITS2 pre-rRNA endonuclease-kinase complex (By similarity).</text>
</comment>
<comment type="subcellular location">
    <subcellularLocation>
        <location evidence="1">Nucleus</location>
        <location evidence="1">Nucleolus</location>
    </subcellularLocation>
    <subcellularLocation>
        <location evidence="6">Nucleus</location>
    </subcellularLocation>
    <text evidence="1">Colocalizes with pre-60S rRNP particles.</text>
</comment>
<comment type="alternative products">
    <event type="alternative splicing"/>
    <isoform>
        <id>Q3TZX8-1</id>
        <name evidence="5">1</name>
        <sequence type="displayed"/>
    </isoform>
    <isoform>
        <id>Q3TZX8-2</id>
        <name evidence="4 5">2</name>
        <sequence type="described" ref="VSP_053056 VSP_053057"/>
    </isoform>
    <isoform>
        <id>Q3TZX8-3</id>
        <name evidence="5">3</name>
        <sequence type="described" ref="VSP_053058 VSP_053059"/>
    </isoform>
</comment>
<comment type="similarity">
    <text evidence="9">Belongs to the Clp1 family. NOL9/GRC3 subfamily.</text>
</comment>
<comment type="sequence caution" evidence="9">
    <conflict type="miscellaneous discrepancy">
        <sequence resource="EMBL-CDS" id="AAH24877"/>
    </conflict>
    <text>Contaminating sequence. Potential poly-A sequence.</text>
</comment>
<organism>
    <name type="scientific">Mus musculus</name>
    <name type="common">Mouse</name>
    <dbReference type="NCBI Taxonomy" id="10090"/>
    <lineage>
        <taxon>Eukaryota</taxon>
        <taxon>Metazoa</taxon>
        <taxon>Chordata</taxon>
        <taxon>Craniata</taxon>
        <taxon>Vertebrata</taxon>
        <taxon>Euteleostomi</taxon>
        <taxon>Mammalia</taxon>
        <taxon>Eutheria</taxon>
        <taxon>Euarchontoglires</taxon>
        <taxon>Glires</taxon>
        <taxon>Rodentia</taxon>
        <taxon>Myomorpha</taxon>
        <taxon>Muroidea</taxon>
        <taxon>Muridae</taxon>
        <taxon>Murinae</taxon>
        <taxon>Mus</taxon>
        <taxon>Mus</taxon>
    </lineage>
</organism>
<feature type="initiator methionine" description="Removed" evidence="1">
    <location>
        <position position="1"/>
    </location>
</feature>
<feature type="chain" id="PRO_0000367432" description="Polynucleotide 5'-hydroxyl-kinase NOL9">
    <location>
        <begin position="2"/>
        <end position="714"/>
    </location>
</feature>
<feature type="region of interest" description="Disordered" evidence="3">
    <location>
        <begin position="80"/>
        <end position="133"/>
    </location>
</feature>
<feature type="region of interest" description="Interaction with LAS1L" evidence="1">
    <location>
        <begin position="495"/>
        <end position="714"/>
    </location>
</feature>
<feature type="short sequence motif" description="Nucleolar localization signal" evidence="1">
    <location>
        <begin position="31"/>
        <end position="47"/>
    </location>
</feature>
<feature type="compositionally biased region" description="Pro residues" evidence="3">
    <location>
        <begin position="86"/>
        <end position="98"/>
    </location>
</feature>
<feature type="compositionally biased region" description="Polar residues" evidence="3">
    <location>
        <begin position="107"/>
        <end position="118"/>
    </location>
</feature>
<feature type="binding site" evidence="2">
    <location>
        <begin position="322"/>
        <end position="329"/>
    </location>
    <ligand>
        <name>ATP</name>
        <dbReference type="ChEBI" id="CHEBI:30616"/>
    </ligand>
</feature>
<feature type="modified residue" description="N-acetylalanine" evidence="1">
    <location>
        <position position="2"/>
    </location>
</feature>
<feature type="modified residue" description="Phosphoserine" evidence="19">
    <location>
        <position position="128"/>
    </location>
</feature>
<feature type="modified residue" description="Phosphoserine" evidence="1">
    <location>
        <position position="502"/>
    </location>
</feature>
<feature type="cross-link" description="Glycyl lysine isopeptide (Lys-Gly) (interchain with G-Cter in SUMO2)" evidence="1">
    <location>
        <position position="500"/>
    </location>
</feature>
<feature type="splice variant" id="VSP_053058" description="In isoform 3." evidence="8">
    <original>I</original>
    <variation>E</variation>
    <location>
        <position position="627"/>
    </location>
</feature>
<feature type="splice variant" id="VSP_053059" description="In isoform 3." evidence="8">
    <location>
        <begin position="628"/>
        <end position="714"/>
    </location>
</feature>
<feature type="splice variant" id="VSP_053056" description="In isoform 2." evidence="7 8">
    <original>P</original>
    <variation>L</variation>
    <location>
        <position position="671"/>
    </location>
</feature>
<feature type="splice variant" id="VSP_053057" description="In isoform 2." evidence="7 8">
    <location>
        <begin position="672"/>
        <end position="714"/>
    </location>
</feature>
<feature type="sequence conflict" description="In Ref. 1; BAC31300." evidence="9" ref="1">
    <original>A</original>
    <variation>G</variation>
    <location>
        <position position="101"/>
    </location>
</feature>
<feature type="sequence conflict" description="In Ref. 1; BAB29433 and 2; CAM24579." evidence="9" ref="1 2">
    <original>D</original>
    <variation>E</variation>
    <location>
        <position position="225"/>
    </location>
</feature>
<feature type="sequence conflict" description="In Ref. 1; BAC34472." evidence="9" ref="1">
    <original>A</original>
    <variation>S</variation>
    <location>
        <position position="269"/>
    </location>
</feature>